<sequence length="150" mass="16763">MKVIFLQDVKGKGKKGEVKEVPTGYAQNFLLKKNLAKEATTQAIGELKGKQKSEEKAQAEILAQAQELKTQLESETTRVQFIEKVGPDGRTFGSITAKKIAEELQKQYGIKIDKRHIDLDHTIRAIGKVEVPVKLHKQVSSQIKLDIKEA</sequence>
<keyword id="KW-0687">Ribonucleoprotein</keyword>
<keyword id="KW-0689">Ribosomal protein</keyword>
<keyword id="KW-0694">RNA-binding</keyword>
<keyword id="KW-0699">rRNA-binding</keyword>
<gene>
    <name evidence="1" type="primary">rplI</name>
    <name type="ordered locus">SAK_2098</name>
</gene>
<proteinExistence type="inferred from homology"/>
<name>RL9_STRA1</name>
<evidence type="ECO:0000255" key="1">
    <source>
        <dbReference type="HAMAP-Rule" id="MF_00503"/>
    </source>
</evidence>
<evidence type="ECO:0000305" key="2"/>
<protein>
    <recommendedName>
        <fullName evidence="1">Large ribosomal subunit protein bL9</fullName>
    </recommendedName>
    <alternativeName>
        <fullName evidence="2">50S ribosomal protein L9</fullName>
    </alternativeName>
</protein>
<dbReference type="EMBL" id="CP000114">
    <property type="protein sequence ID" value="ABA45219.1"/>
    <property type="molecule type" value="Genomic_DNA"/>
</dbReference>
<dbReference type="RefSeq" id="WP_000864243.1">
    <property type="nucleotide sequence ID" value="NC_007432.1"/>
</dbReference>
<dbReference type="SMR" id="Q3JYG5"/>
<dbReference type="KEGG" id="sak:SAK_2098"/>
<dbReference type="HOGENOM" id="CLU_078938_3_2_9"/>
<dbReference type="GO" id="GO:1990904">
    <property type="term" value="C:ribonucleoprotein complex"/>
    <property type="evidence" value="ECO:0007669"/>
    <property type="project" value="UniProtKB-KW"/>
</dbReference>
<dbReference type="GO" id="GO:0005840">
    <property type="term" value="C:ribosome"/>
    <property type="evidence" value="ECO:0007669"/>
    <property type="project" value="UniProtKB-KW"/>
</dbReference>
<dbReference type="GO" id="GO:0019843">
    <property type="term" value="F:rRNA binding"/>
    <property type="evidence" value="ECO:0007669"/>
    <property type="project" value="UniProtKB-UniRule"/>
</dbReference>
<dbReference type="GO" id="GO:0003735">
    <property type="term" value="F:structural constituent of ribosome"/>
    <property type="evidence" value="ECO:0007669"/>
    <property type="project" value="InterPro"/>
</dbReference>
<dbReference type="GO" id="GO:0006412">
    <property type="term" value="P:translation"/>
    <property type="evidence" value="ECO:0007669"/>
    <property type="project" value="UniProtKB-UniRule"/>
</dbReference>
<dbReference type="FunFam" id="3.40.5.10:FF:000002">
    <property type="entry name" value="50S ribosomal protein L9"/>
    <property type="match status" value="1"/>
</dbReference>
<dbReference type="Gene3D" id="3.10.430.100">
    <property type="entry name" value="Ribosomal protein L9, C-terminal domain"/>
    <property type="match status" value="1"/>
</dbReference>
<dbReference type="Gene3D" id="3.40.5.10">
    <property type="entry name" value="Ribosomal protein L9, N-terminal domain"/>
    <property type="match status" value="1"/>
</dbReference>
<dbReference type="HAMAP" id="MF_00503">
    <property type="entry name" value="Ribosomal_bL9"/>
    <property type="match status" value="1"/>
</dbReference>
<dbReference type="InterPro" id="IPR000244">
    <property type="entry name" value="Ribosomal_bL9"/>
</dbReference>
<dbReference type="InterPro" id="IPR009027">
    <property type="entry name" value="Ribosomal_bL9/RNase_H1_N"/>
</dbReference>
<dbReference type="InterPro" id="IPR020594">
    <property type="entry name" value="Ribosomal_bL9_bac/chp"/>
</dbReference>
<dbReference type="InterPro" id="IPR020069">
    <property type="entry name" value="Ribosomal_bL9_C"/>
</dbReference>
<dbReference type="InterPro" id="IPR036791">
    <property type="entry name" value="Ribosomal_bL9_C_sf"/>
</dbReference>
<dbReference type="InterPro" id="IPR020070">
    <property type="entry name" value="Ribosomal_bL9_N"/>
</dbReference>
<dbReference type="InterPro" id="IPR036935">
    <property type="entry name" value="Ribosomal_bL9_N_sf"/>
</dbReference>
<dbReference type="NCBIfam" id="TIGR00158">
    <property type="entry name" value="L9"/>
    <property type="match status" value="1"/>
</dbReference>
<dbReference type="PANTHER" id="PTHR21368">
    <property type="entry name" value="50S RIBOSOMAL PROTEIN L9"/>
    <property type="match status" value="1"/>
</dbReference>
<dbReference type="Pfam" id="PF03948">
    <property type="entry name" value="Ribosomal_L9_C"/>
    <property type="match status" value="1"/>
</dbReference>
<dbReference type="Pfam" id="PF01281">
    <property type="entry name" value="Ribosomal_L9_N"/>
    <property type="match status" value="1"/>
</dbReference>
<dbReference type="SUPFAM" id="SSF55658">
    <property type="entry name" value="L9 N-domain-like"/>
    <property type="match status" value="1"/>
</dbReference>
<dbReference type="SUPFAM" id="SSF55653">
    <property type="entry name" value="Ribosomal protein L9 C-domain"/>
    <property type="match status" value="1"/>
</dbReference>
<dbReference type="PROSITE" id="PS00651">
    <property type="entry name" value="RIBOSOMAL_L9"/>
    <property type="match status" value="1"/>
</dbReference>
<organism>
    <name type="scientific">Streptococcus agalactiae serotype Ia (strain ATCC 27591 / A909 / CDC SS700)</name>
    <dbReference type="NCBI Taxonomy" id="205921"/>
    <lineage>
        <taxon>Bacteria</taxon>
        <taxon>Bacillati</taxon>
        <taxon>Bacillota</taxon>
        <taxon>Bacilli</taxon>
        <taxon>Lactobacillales</taxon>
        <taxon>Streptococcaceae</taxon>
        <taxon>Streptococcus</taxon>
    </lineage>
</organism>
<accession>Q3JYG5</accession>
<feature type="chain" id="PRO_0000236592" description="Large ribosomal subunit protein bL9">
    <location>
        <begin position="1"/>
        <end position="150"/>
    </location>
</feature>
<reference key="1">
    <citation type="journal article" date="2005" name="Proc. Natl. Acad. Sci. U.S.A.">
        <title>Genome analysis of multiple pathogenic isolates of Streptococcus agalactiae: implications for the microbial 'pan-genome'.</title>
        <authorList>
            <person name="Tettelin H."/>
            <person name="Masignani V."/>
            <person name="Cieslewicz M.J."/>
            <person name="Donati C."/>
            <person name="Medini D."/>
            <person name="Ward N.L."/>
            <person name="Angiuoli S.V."/>
            <person name="Crabtree J."/>
            <person name="Jones A.L."/>
            <person name="Durkin A.S."/>
            <person name="DeBoy R.T."/>
            <person name="Davidsen T.M."/>
            <person name="Mora M."/>
            <person name="Scarselli M."/>
            <person name="Margarit y Ros I."/>
            <person name="Peterson J.D."/>
            <person name="Hauser C.R."/>
            <person name="Sundaram J.P."/>
            <person name="Nelson W.C."/>
            <person name="Madupu R."/>
            <person name="Brinkac L.M."/>
            <person name="Dodson R.J."/>
            <person name="Rosovitz M.J."/>
            <person name="Sullivan S.A."/>
            <person name="Daugherty S.C."/>
            <person name="Haft D.H."/>
            <person name="Selengut J."/>
            <person name="Gwinn M.L."/>
            <person name="Zhou L."/>
            <person name="Zafar N."/>
            <person name="Khouri H."/>
            <person name="Radune D."/>
            <person name="Dimitrov G."/>
            <person name="Watkins K."/>
            <person name="O'Connor K.J."/>
            <person name="Smith S."/>
            <person name="Utterback T.R."/>
            <person name="White O."/>
            <person name="Rubens C.E."/>
            <person name="Grandi G."/>
            <person name="Madoff L.C."/>
            <person name="Kasper D.L."/>
            <person name="Telford J.L."/>
            <person name="Wessels M.R."/>
            <person name="Rappuoli R."/>
            <person name="Fraser C.M."/>
        </authorList>
    </citation>
    <scope>NUCLEOTIDE SEQUENCE [LARGE SCALE GENOMIC DNA]</scope>
    <source>
        <strain>ATCC 27591 / A909 / CDC SS700</strain>
    </source>
</reference>
<comment type="function">
    <text evidence="1">Binds to the 23S rRNA.</text>
</comment>
<comment type="similarity">
    <text evidence="1">Belongs to the bacterial ribosomal protein bL9 family.</text>
</comment>